<proteinExistence type="evidence at protein level"/>
<feature type="chain" id="PRO_0000413568" description="Glutathione S-transferase U23">
    <location>
        <begin position="1"/>
        <end position="220"/>
    </location>
</feature>
<feature type="domain" description="GST N-terminal">
    <location>
        <begin position="3"/>
        <end position="82"/>
    </location>
</feature>
<feature type="domain" description="GST C-terminal">
    <location>
        <begin position="88"/>
        <end position="208"/>
    </location>
</feature>
<feature type="binding site" evidence="1">
    <location>
        <begin position="13"/>
        <end position="14"/>
    </location>
    <ligand>
        <name>glutathione</name>
        <dbReference type="ChEBI" id="CHEBI:57925"/>
    </ligand>
</feature>
<feature type="binding site" evidence="1">
    <location>
        <begin position="39"/>
        <end position="40"/>
    </location>
    <ligand>
        <name>glutathione</name>
        <dbReference type="ChEBI" id="CHEBI:57925"/>
    </ligand>
</feature>
<feature type="binding site" evidence="1">
    <location>
        <begin position="53"/>
        <end position="54"/>
    </location>
    <ligand>
        <name>glutathione</name>
        <dbReference type="ChEBI" id="CHEBI:57925"/>
    </ligand>
</feature>
<feature type="binding site" evidence="1">
    <location>
        <begin position="66"/>
        <end position="67"/>
    </location>
    <ligand>
        <name>glutathione</name>
        <dbReference type="ChEBI" id="CHEBI:57925"/>
    </ligand>
</feature>
<feature type="strand" evidence="3">
    <location>
        <begin position="5"/>
        <end position="9"/>
    </location>
</feature>
<feature type="helix" evidence="3">
    <location>
        <begin position="14"/>
        <end position="25"/>
    </location>
</feature>
<feature type="strand" evidence="3">
    <location>
        <begin position="31"/>
        <end position="34"/>
    </location>
</feature>
<feature type="helix" evidence="3">
    <location>
        <begin position="42"/>
        <end position="47"/>
    </location>
</feature>
<feature type="turn" evidence="3">
    <location>
        <begin position="49"/>
        <end position="51"/>
    </location>
</feature>
<feature type="strand" evidence="3">
    <location>
        <begin position="56"/>
        <end position="59"/>
    </location>
</feature>
<feature type="strand" evidence="3">
    <location>
        <begin position="62"/>
        <end position="66"/>
    </location>
</feature>
<feature type="helix" evidence="3">
    <location>
        <begin position="67"/>
        <end position="77"/>
    </location>
</feature>
<feature type="helix" evidence="3">
    <location>
        <begin position="89"/>
        <end position="106"/>
    </location>
</feature>
<feature type="turn" evidence="3">
    <location>
        <begin position="107"/>
        <end position="110"/>
    </location>
</feature>
<feature type="helix" evidence="3">
    <location>
        <begin position="111"/>
        <end position="115"/>
    </location>
</feature>
<feature type="helix" evidence="3">
    <location>
        <begin position="118"/>
        <end position="139"/>
    </location>
</feature>
<feature type="helix" evidence="3">
    <location>
        <begin position="152"/>
        <end position="158"/>
    </location>
</feature>
<feature type="helix" evidence="3">
    <location>
        <begin position="159"/>
        <end position="163"/>
    </location>
</feature>
<feature type="helix" evidence="3">
    <location>
        <begin position="164"/>
        <end position="170"/>
    </location>
</feature>
<feature type="turn" evidence="3">
    <location>
        <begin position="176"/>
        <end position="178"/>
    </location>
</feature>
<feature type="helix" evidence="3">
    <location>
        <begin position="180"/>
        <end position="189"/>
    </location>
</feature>
<feature type="helix" evidence="3">
    <location>
        <begin position="193"/>
        <end position="198"/>
    </location>
</feature>
<feature type="helix" evidence="3">
    <location>
        <begin position="202"/>
        <end position="214"/>
    </location>
</feature>
<gene>
    <name type="primary">GSTU23</name>
    <name type="ordered locus">At1g78320</name>
    <name type="ORF">F3F9.14</name>
</gene>
<accession>Q9M9F1</accession>
<name>GSTUN_ARATH</name>
<evidence type="ECO:0000250" key="1"/>
<evidence type="ECO:0000305" key="2"/>
<evidence type="ECO:0007829" key="3">
    <source>
        <dbReference type="PDB" id="6EP6"/>
    </source>
</evidence>
<organism>
    <name type="scientific">Arabidopsis thaliana</name>
    <name type="common">Mouse-ear cress</name>
    <dbReference type="NCBI Taxonomy" id="3702"/>
    <lineage>
        <taxon>Eukaryota</taxon>
        <taxon>Viridiplantae</taxon>
        <taxon>Streptophyta</taxon>
        <taxon>Embryophyta</taxon>
        <taxon>Tracheophyta</taxon>
        <taxon>Spermatophyta</taxon>
        <taxon>Magnoliopsida</taxon>
        <taxon>eudicotyledons</taxon>
        <taxon>Gunneridae</taxon>
        <taxon>Pentapetalae</taxon>
        <taxon>rosids</taxon>
        <taxon>malvids</taxon>
        <taxon>Brassicales</taxon>
        <taxon>Brassicaceae</taxon>
        <taxon>Camelineae</taxon>
        <taxon>Arabidopsis</taxon>
    </lineage>
</organism>
<sequence length="220" mass="25681">MEEEIILLDYWASMYGMRTRIALEEKKVKYEYREEDLSNKSPLLLQMNPIHKKIPVLIHEGKPICESIIQVQYIDELWPDTNPILPSDPYQRAQARFWADYIDKKTYVPCKALWSESGEKQEAAKIEFIEVLKTLDSELGDKYYFGGNEFGLVDIAFIGFYSWFRTYEEVANLSIVLEFPKLMAWAQRCLKRESVAKALPDSDKVLKSVSDHRKIILGID</sequence>
<reference key="1">
    <citation type="journal article" date="2000" name="Nature">
        <title>Sequence and analysis of chromosome 1 of the plant Arabidopsis thaliana.</title>
        <authorList>
            <person name="Theologis A."/>
            <person name="Ecker J.R."/>
            <person name="Palm C.J."/>
            <person name="Federspiel N.A."/>
            <person name="Kaul S."/>
            <person name="White O."/>
            <person name="Alonso J."/>
            <person name="Altafi H."/>
            <person name="Araujo R."/>
            <person name="Bowman C.L."/>
            <person name="Brooks S.Y."/>
            <person name="Buehler E."/>
            <person name="Chan A."/>
            <person name="Chao Q."/>
            <person name="Chen H."/>
            <person name="Cheuk R.F."/>
            <person name="Chin C.W."/>
            <person name="Chung M.K."/>
            <person name="Conn L."/>
            <person name="Conway A.B."/>
            <person name="Conway A.R."/>
            <person name="Creasy T.H."/>
            <person name="Dewar K."/>
            <person name="Dunn P."/>
            <person name="Etgu P."/>
            <person name="Feldblyum T.V."/>
            <person name="Feng J.-D."/>
            <person name="Fong B."/>
            <person name="Fujii C.Y."/>
            <person name="Gill J.E."/>
            <person name="Goldsmith A.D."/>
            <person name="Haas B."/>
            <person name="Hansen N.F."/>
            <person name="Hughes B."/>
            <person name="Huizar L."/>
            <person name="Hunter J.L."/>
            <person name="Jenkins J."/>
            <person name="Johnson-Hopson C."/>
            <person name="Khan S."/>
            <person name="Khaykin E."/>
            <person name="Kim C.J."/>
            <person name="Koo H.L."/>
            <person name="Kremenetskaia I."/>
            <person name="Kurtz D.B."/>
            <person name="Kwan A."/>
            <person name="Lam B."/>
            <person name="Langin-Hooper S."/>
            <person name="Lee A."/>
            <person name="Lee J.M."/>
            <person name="Lenz C.A."/>
            <person name="Li J.H."/>
            <person name="Li Y.-P."/>
            <person name="Lin X."/>
            <person name="Liu S.X."/>
            <person name="Liu Z.A."/>
            <person name="Luros J.S."/>
            <person name="Maiti R."/>
            <person name="Marziali A."/>
            <person name="Militscher J."/>
            <person name="Miranda M."/>
            <person name="Nguyen M."/>
            <person name="Nierman W.C."/>
            <person name="Osborne B.I."/>
            <person name="Pai G."/>
            <person name="Peterson J."/>
            <person name="Pham P.K."/>
            <person name="Rizzo M."/>
            <person name="Rooney T."/>
            <person name="Rowley D."/>
            <person name="Sakano H."/>
            <person name="Salzberg S.L."/>
            <person name="Schwartz J.R."/>
            <person name="Shinn P."/>
            <person name="Southwick A.M."/>
            <person name="Sun H."/>
            <person name="Tallon L.J."/>
            <person name="Tambunga G."/>
            <person name="Toriumi M.J."/>
            <person name="Town C.D."/>
            <person name="Utterback T."/>
            <person name="Van Aken S."/>
            <person name="Vaysberg M."/>
            <person name="Vysotskaia V.S."/>
            <person name="Walker M."/>
            <person name="Wu D."/>
            <person name="Yu G."/>
            <person name="Fraser C.M."/>
            <person name="Venter J.C."/>
            <person name="Davis R.W."/>
        </authorList>
    </citation>
    <scope>NUCLEOTIDE SEQUENCE [LARGE SCALE GENOMIC DNA]</scope>
    <source>
        <strain>cv. Columbia</strain>
    </source>
</reference>
<reference key="2">
    <citation type="journal article" date="2017" name="Plant J.">
        <title>Araport11: a complete reannotation of the Arabidopsis thaliana reference genome.</title>
        <authorList>
            <person name="Cheng C.Y."/>
            <person name="Krishnakumar V."/>
            <person name="Chan A.P."/>
            <person name="Thibaud-Nissen F."/>
            <person name="Schobel S."/>
            <person name="Town C.D."/>
        </authorList>
    </citation>
    <scope>GENOME REANNOTATION</scope>
    <source>
        <strain>cv. Columbia</strain>
    </source>
</reference>
<reference key="3">
    <citation type="submission" date="2006-04" db="EMBL/GenBank/DDBJ databases">
        <title>Arabidopsis ORF clones.</title>
        <authorList>
            <person name="Shinn P."/>
            <person name="Chen H."/>
            <person name="Kim C.J."/>
            <person name="Ecker J.R."/>
        </authorList>
    </citation>
    <scope>NUCLEOTIDE SEQUENCE [LARGE SCALE MRNA]</scope>
    <source>
        <strain>cv. Columbia</strain>
    </source>
</reference>
<reference key="4">
    <citation type="submission" date="2002-03" db="EMBL/GenBank/DDBJ databases">
        <title>Full-length cDNA from Arabidopsis thaliana.</title>
        <authorList>
            <person name="Brover V.V."/>
            <person name="Troukhan M.E."/>
            <person name="Alexandrov N.A."/>
            <person name="Lu Y.-P."/>
            <person name="Flavell R.B."/>
            <person name="Feldmann K.A."/>
        </authorList>
    </citation>
    <scope>NUCLEOTIDE SEQUENCE [LARGE SCALE MRNA]</scope>
</reference>
<reference key="5">
    <citation type="journal article" date="2002" name="Plant Mol. Biol.">
        <title>Probing the diversity of the Arabidopsis glutathione S-transferase gene family.</title>
        <authorList>
            <person name="Wagner U."/>
            <person name="Edwards R."/>
            <person name="Dixon D.P."/>
            <person name="Mauch F."/>
        </authorList>
    </citation>
    <scope>GENE FAMILY</scope>
    <scope>NOMENCLATURE</scope>
</reference>
<comment type="function">
    <text evidence="1">May be involved in the conjugation of reduced glutathione to a wide number of exogenous and endogenous hydrophobic electrophiles and have a detoxification role against certain herbicides.</text>
</comment>
<comment type="catalytic activity">
    <reaction>
        <text>RX + glutathione = an S-substituted glutathione + a halide anion + H(+)</text>
        <dbReference type="Rhea" id="RHEA:16437"/>
        <dbReference type="ChEBI" id="CHEBI:15378"/>
        <dbReference type="ChEBI" id="CHEBI:16042"/>
        <dbReference type="ChEBI" id="CHEBI:17792"/>
        <dbReference type="ChEBI" id="CHEBI:57925"/>
        <dbReference type="ChEBI" id="CHEBI:90779"/>
        <dbReference type="EC" id="2.5.1.18"/>
    </reaction>
</comment>
<comment type="subcellular location">
    <subcellularLocation>
        <location evidence="2">Cytoplasm</location>
        <location evidence="2">Cytosol</location>
    </subcellularLocation>
</comment>
<comment type="similarity">
    <text evidence="2">Belongs to the GST superfamily. Tau family.</text>
</comment>
<keyword id="KW-0002">3D-structure</keyword>
<keyword id="KW-0963">Cytoplasm</keyword>
<keyword id="KW-0216">Detoxification</keyword>
<keyword id="KW-1185">Reference proteome</keyword>
<keyword id="KW-0808">Transferase</keyword>
<dbReference type="EC" id="2.5.1.18"/>
<dbReference type="EMBL" id="AC013430">
    <property type="protein sequence ID" value="AAF71800.1"/>
    <property type="molecule type" value="Genomic_DNA"/>
</dbReference>
<dbReference type="EMBL" id="CP002684">
    <property type="protein sequence ID" value="AEE36095.1"/>
    <property type="molecule type" value="Genomic_DNA"/>
</dbReference>
<dbReference type="EMBL" id="BT025286">
    <property type="protein sequence ID" value="ABF19039.1"/>
    <property type="molecule type" value="mRNA"/>
</dbReference>
<dbReference type="EMBL" id="AY085813">
    <property type="protein sequence ID" value="AAM63029.1"/>
    <property type="molecule type" value="mRNA"/>
</dbReference>
<dbReference type="PIR" id="C96812">
    <property type="entry name" value="C96812"/>
</dbReference>
<dbReference type="RefSeq" id="NP_177955.1">
    <property type="nucleotide sequence ID" value="NM_106481.4"/>
</dbReference>
<dbReference type="PDB" id="5O84">
    <property type="method" value="X-ray"/>
    <property type="resolution" value="1.88 A"/>
    <property type="chains" value="A=3-218"/>
</dbReference>
<dbReference type="PDB" id="6EP6">
    <property type="method" value="X-ray"/>
    <property type="resolution" value="1.59 A"/>
    <property type="chains" value="A/B=1-220"/>
</dbReference>
<dbReference type="PDB" id="6EP7">
    <property type="method" value="X-ray"/>
    <property type="resolution" value="1.95 A"/>
    <property type="chains" value="A/B=1-220"/>
</dbReference>
<dbReference type="PDBsum" id="5O84"/>
<dbReference type="PDBsum" id="6EP6"/>
<dbReference type="PDBsum" id="6EP7"/>
<dbReference type="SMR" id="Q9M9F1"/>
<dbReference type="FunCoup" id="Q9M9F1">
    <property type="interactions" value="132"/>
</dbReference>
<dbReference type="STRING" id="3702.Q9M9F1"/>
<dbReference type="MetOSite" id="Q9M9F1"/>
<dbReference type="PaxDb" id="3702-AT1G78320.1"/>
<dbReference type="ProteomicsDB" id="247344"/>
<dbReference type="EnsemblPlants" id="AT1G78320.1">
    <property type="protein sequence ID" value="AT1G78320.1"/>
    <property type="gene ID" value="AT1G78320"/>
</dbReference>
<dbReference type="GeneID" id="844167"/>
<dbReference type="Gramene" id="AT1G78320.1">
    <property type="protein sequence ID" value="AT1G78320.1"/>
    <property type="gene ID" value="AT1G78320"/>
</dbReference>
<dbReference type="KEGG" id="ath:AT1G78320"/>
<dbReference type="Araport" id="AT1G78320"/>
<dbReference type="TAIR" id="AT1G78320">
    <property type="gene designation" value="GSTU23"/>
</dbReference>
<dbReference type="eggNOG" id="KOG0406">
    <property type="taxonomic scope" value="Eukaryota"/>
</dbReference>
<dbReference type="HOGENOM" id="CLU_011226_18_2_1"/>
<dbReference type="InParanoid" id="Q9M9F1"/>
<dbReference type="OMA" id="AKMEFME"/>
<dbReference type="OrthoDB" id="202840at2759"/>
<dbReference type="PhylomeDB" id="Q9M9F1"/>
<dbReference type="BioCyc" id="ARA:AT1G78320-MONOMER"/>
<dbReference type="PRO" id="PR:Q9M9F1"/>
<dbReference type="Proteomes" id="UP000006548">
    <property type="component" value="Chromosome 1"/>
</dbReference>
<dbReference type="ExpressionAtlas" id="Q9M9F1">
    <property type="expression patterns" value="baseline and differential"/>
</dbReference>
<dbReference type="GO" id="GO:0005737">
    <property type="term" value="C:cytoplasm"/>
    <property type="evidence" value="ECO:0000303"/>
    <property type="project" value="TAIR"/>
</dbReference>
<dbReference type="GO" id="GO:0005829">
    <property type="term" value="C:cytosol"/>
    <property type="evidence" value="ECO:0007669"/>
    <property type="project" value="UniProtKB-SubCell"/>
</dbReference>
<dbReference type="GO" id="GO:0005739">
    <property type="term" value="C:mitochondrion"/>
    <property type="evidence" value="ECO:0007005"/>
    <property type="project" value="TAIR"/>
</dbReference>
<dbReference type="GO" id="GO:0004364">
    <property type="term" value="F:glutathione transferase activity"/>
    <property type="evidence" value="ECO:0007669"/>
    <property type="project" value="UniProtKB-EC"/>
</dbReference>
<dbReference type="GO" id="GO:0006749">
    <property type="term" value="P:glutathione metabolic process"/>
    <property type="evidence" value="ECO:0007669"/>
    <property type="project" value="InterPro"/>
</dbReference>
<dbReference type="GO" id="GO:0009407">
    <property type="term" value="P:toxin catabolic process"/>
    <property type="evidence" value="ECO:0000304"/>
    <property type="project" value="TAIR"/>
</dbReference>
<dbReference type="CDD" id="cd03185">
    <property type="entry name" value="GST_C_Tau"/>
    <property type="match status" value="1"/>
</dbReference>
<dbReference type="CDD" id="cd03058">
    <property type="entry name" value="GST_N_Tau"/>
    <property type="match status" value="1"/>
</dbReference>
<dbReference type="FunFam" id="1.20.1050.10:FF:000018">
    <property type="entry name" value="Glutathione S-transferase U20"/>
    <property type="match status" value="1"/>
</dbReference>
<dbReference type="FunFam" id="3.40.30.10:FF:000014">
    <property type="entry name" value="Tau class glutathione S-transferase"/>
    <property type="match status" value="1"/>
</dbReference>
<dbReference type="Gene3D" id="1.20.1050.10">
    <property type="match status" value="1"/>
</dbReference>
<dbReference type="Gene3D" id="3.40.30.10">
    <property type="entry name" value="Glutaredoxin"/>
    <property type="match status" value="1"/>
</dbReference>
<dbReference type="InterPro" id="IPR010987">
    <property type="entry name" value="Glutathione-S-Trfase_C-like"/>
</dbReference>
<dbReference type="InterPro" id="IPR036282">
    <property type="entry name" value="Glutathione-S-Trfase_C_sf"/>
</dbReference>
<dbReference type="InterPro" id="IPR004045">
    <property type="entry name" value="Glutathione_S-Trfase_N"/>
</dbReference>
<dbReference type="InterPro" id="IPR004046">
    <property type="entry name" value="GST_C"/>
</dbReference>
<dbReference type="InterPro" id="IPR045074">
    <property type="entry name" value="GST_C_Tau"/>
</dbReference>
<dbReference type="InterPro" id="IPR045073">
    <property type="entry name" value="Omega/Tau-like"/>
</dbReference>
<dbReference type="InterPro" id="IPR036249">
    <property type="entry name" value="Thioredoxin-like_sf"/>
</dbReference>
<dbReference type="PANTHER" id="PTHR11260:SF605">
    <property type="entry name" value="GLUTATHIONE S-TRANSFERASE U23"/>
    <property type="match status" value="1"/>
</dbReference>
<dbReference type="PANTHER" id="PTHR11260">
    <property type="entry name" value="GLUTATHIONE S-TRANSFERASE, GST, SUPERFAMILY, GST DOMAIN CONTAINING"/>
    <property type="match status" value="1"/>
</dbReference>
<dbReference type="Pfam" id="PF00043">
    <property type="entry name" value="GST_C"/>
    <property type="match status" value="1"/>
</dbReference>
<dbReference type="Pfam" id="PF02798">
    <property type="entry name" value="GST_N"/>
    <property type="match status" value="1"/>
</dbReference>
<dbReference type="SFLD" id="SFLDG01152">
    <property type="entry name" value="Main.3:_Omega-_and_Tau-like"/>
    <property type="match status" value="1"/>
</dbReference>
<dbReference type="SFLD" id="SFLDG00358">
    <property type="entry name" value="Main_(cytGST)"/>
    <property type="match status" value="1"/>
</dbReference>
<dbReference type="SUPFAM" id="SSF47616">
    <property type="entry name" value="GST C-terminal domain-like"/>
    <property type="match status" value="1"/>
</dbReference>
<dbReference type="SUPFAM" id="SSF52833">
    <property type="entry name" value="Thioredoxin-like"/>
    <property type="match status" value="1"/>
</dbReference>
<dbReference type="PROSITE" id="PS50405">
    <property type="entry name" value="GST_CTER"/>
    <property type="match status" value="1"/>
</dbReference>
<dbReference type="PROSITE" id="PS50404">
    <property type="entry name" value="GST_NTER"/>
    <property type="match status" value="1"/>
</dbReference>
<protein>
    <recommendedName>
        <fullName>Glutathione S-transferase U23</fullName>
        <shortName>AtGSTU23</shortName>
        <ecNumber>2.5.1.18</ecNumber>
    </recommendedName>
    <alternativeName>
        <fullName>GST class-tau member 23</fullName>
    </alternativeName>
</protein>